<name>RLUC_BUCAI</name>
<keyword id="KW-0413">Isomerase</keyword>
<keyword id="KW-1185">Reference proteome</keyword>
<keyword id="KW-0694">RNA-binding</keyword>
<keyword id="KW-0698">rRNA processing</keyword>
<evidence type="ECO:0000250" key="1"/>
<evidence type="ECO:0000255" key="2">
    <source>
        <dbReference type="PROSITE-ProRule" id="PRU00182"/>
    </source>
</evidence>
<evidence type="ECO:0000305" key="3"/>
<feature type="chain" id="PRO_0000162664" description="Ribosomal large subunit pseudouridine synthase C">
    <location>
        <begin position="1"/>
        <end position="314"/>
    </location>
</feature>
<feature type="domain" description="S4 RNA-binding" evidence="2">
    <location>
        <begin position="20"/>
        <end position="84"/>
    </location>
</feature>
<feature type="active site" evidence="1">
    <location>
        <position position="143"/>
    </location>
</feature>
<comment type="function">
    <text evidence="1">Responsible for synthesis of pseudouridine from uracil at positions 955, 2504 and 2580 in 23S ribosomal RNA.</text>
</comment>
<comment type="catalytic activity">
    <reaction>
        <text>uridine(955/2504/2580) in 23S rRNA = pseudouridine(955/2504/2580) in 23S rRNA</text>
        <dbReference type="Rhea" id="RHEA:42528"/>
        <dbReference type="Rhea" id="RHEA-COMP:10099"/>
        <dbReference type="Rhea" id="RHEA-COMP:10100"/>
        <dbReference type="ChEBI" id="CHEBI:65314"/>
        <dbReference type="ChEBI" id="CHEBI:65315"/>
        <dbReference type="EC" id="5.4.99.24"/>
    </reaction>
</comment>
<comment type="similarity">
    <text evidence="3">Belongs to the pseudouridine synthase RluA family.</text>
</comment>
<dbReference type="EC" id="5.4.99.24"/>
<dbReference type="EMBL" id="BA000003">
    <property type="protein sequence ID" value="BAB13053.1"/>
    <property type="molecule type" value="Genomic_DNA"/>
</dbReference>
<dbReference type="RefSeq" id="NP_240167.1">
    <property type="nucleotide sequence ID" value="NC_002528.1"/>
</dbReference>
<dbReference type="RefSeq" id="WP_009874303.1">
    <property type="nucleotide sequence ID" value="NC_002528.1"/>
</dbReference>
<dbReference type="SMR" id="P57430"/>
<dbReference type="STRING" id="563178.BUAP5A_342"/>
<dbReference type="EnsemblBacteria" id="BAB13053">
    <property type="protein sequence ID" value="BAB13053"/>
    <property type="gene ID" value="BAB13053"/>
</dbReference>
<dbReference type="KEGG" id="buc:BU348"/>
<dbReference type="PATRIC" id="fig|107806.10.peg.360"/>
<dbReference type="eggNOG" id="COG0564">
    <property type="taxonomic scope" value="Bacteria"/>
</dbReference>
<dbReference type="eggNOG" id="COG1188">
    <property type="taxonomic scope" value="Bacteria"/>
</dbReference>
<dbReference type="HOGENOM" id="CLU_016902_1_1_6"/>
<dbReference type="Proteomes" id="UP000001806">
    <property type="component" value="Chromosome"/>
</dbReference>
<dbReference type="GO" id="GO:0160141">
    <property type="term" value="F:23S rRNA pseudouridine(955/2504/2580) synthase activity"/>
    <property type="evidence" value="ECO:0007669"/>
    <property type="project" value="UniProtKB-EC"/>
</dbReference>
<dbReference type="GO" id="GO:0003723">
    <property type="term" value="F:RNA binding"/>
    <property type="evidence" value="ECO:0007669"/>
    <property type="project" value="UniProtKB-KW"/>
</dbReference>
<dbReference type="GO" id="GO:0000455">
    <property type="term" value="P:enzyme-directed rRNA pseudouridine synthesis"/>
    <property type="evidence" value="ECO:0007669"/>
    <property type="project" value="UniProtKB-ARBA"/>
</dbReference>
<dbReference type="CDD" id="cd02869">
    <property type="entry name" value="PseudoU_synth_RluA_like"/>
    <property type="match status" value="1"/>
</dbReference>
<dbReference type="CDD" id="cd00165">
    <property type="entry name" value="S4"/>
    <property type="match status" value="1"/>
</dbReference>
<dbReference type="Gene3D" id="3.30.2350.10">
    <property type="entry name" value="Pseudouridine synthase"/>
    <property type="match status" value="1"/>
</dbReference>
<dbReference type="Gene3D" id="3.10.290.10">
    <property type="entry name" value="RNA-binding S4 domain"/>
    <property type="match status" value="1"/>
</dbReference>
<dbReference type="InterPro" id="IPR020103">
    <property type="entry name" value="PsdUridine_synth_cat_dom_sf"/>
</dbReference>
<dbReference type="InterPro" id="IPR006224">
    <property type="entry name" value="PsdUridine_synth_RluA-like_CS"/>
</dbReference>
<dbReference type="InterPro" id="IPR006225">
    <property type="entry name" value="PsdUridine_synth_RluC/D"/>
</dbReference>
<dbReference type="InterPro" id="IPR006145">
    <property type="entry name" value="PsdUridine_synth_RsuA/RluA"/>
</dbReference>
<dbReference type="InterPro" id="IPR050188">
    <property type="entry name" value="RluA_PseudoU_synthase"/>
</dbReference>
<dbReference type="InterPro" id="IPR002942">
    <property type="entry name" value="S4_RNA-bd"/>
</dbReference>
<dbReference type="InterPro" id="IPR036986">
    <property type="entry name" value="S4_RNA-bd_sf"/>
</dbReference>
<dbReference type="NCBIfam" id="NF008249">
    <property type="entry name" value="PRK11025.1"/>
    <property type="match status" value="1"/>
</dbReference>
<dbReference type="NCBIfam" id="TIGR00005">
    <property type="entry name" value="rluA_subfam"/>
    <property type="match status" value="1"/>
</dbReference>
<dbReference type="PANTHER" id="PTHR21600">
    <property type="entry name" value="MITOCHONDRIAL RNA PSEUDOURIDINE SYNTHASE"/>
    <property type="match status" value="1"/>
</dbReference>
<dbReference type="PANTHER" id="PTHR21600:SF92">
    <property type="entry name" value="RIBOSOMAL LARGE SUBUNIT PSEUDOURIDINE SYNTHASE C"/>
    <property type="match status" value="1"/>
</dbReference>
<dbReference type="Pfam" id="PF00849">
    <property type="entry name" value="PseudoU_synth_2"/>
    <property type="match status" value="1"/>
</dbReference>
<dbReference type="Pfam" id="PF01479">
    <property type="entry name" value="S4"/>
    <property type="match status" value="1"/>
</dbReference>
<dbReference type="SMART" id="SM00363">
    <property type="entry name" value="S4"/>
    <property type="match status" value="1"/>
</dbReference>
<dbReference type="SUPFAM" id="SSF55174">
    <property type="entry name" value="Alpha-L RNA-binding motif"/>
    <property type="match status" value="1"/>
</dbReference>
<dbReference type="SUPFAM" id="SSF55120">
    <property type="entry name" value="Pseudouridine synthase"/>
    <property type="match status" value="1"/>
</dbReference>
<dbReference type="PROSITE" id="PS01129">
    <property type="entry name" value="PSI_RLU"/>
    <property type="match status" value="1"/>
</dbReference>
<dbReference type="PROSITE" id="PS50889">
    <property type="entry name" value="S4"/>
    <property type="match status" value="1"/>
</dbReference>
<gene>
    <name type="primary">rluC</name>
    <name type="ordered locus">BU348</name>
</gene>
<accession>P57430</accession>
<protein>
    <recommendedName>
        <fullName>Ribosomal large subunit pseudouridine synthase C</fullName>
        <ecNumber>5.4.99.24</ecNumber>
    </recommendedName>
    <alternativeName>
        <fullName>23S rRNA pseudouridine(955/2504/2580) synthase</fullName>
    </alternativeName>
    <alternativeName>
        <fullName>rRNA pseudouridylate synthase C</fullName>
    </alternativeName>
    <alternativeName>
        <fullName>rRNA-uridine isomerase C</fullName>
    </alternativeName>
</protein>
<sequence>MTHKILPISIIYINKEMLNQRIDNFMRSKFKSVPKSMIYRIIRTGKIRINKKRIKPHYKLKIGDILKIPPIKILCDIKNTFFPLNHSTNLLNRILYEDSHLLIINKPSGIAVHGGSGLNFGVIEYFRKLRPLNKFLELVHRIDRDTSGVLILAKKRTSLVSLHEQLREKKIKKEYIALVHGLWPDHIKKISEPLLKIQFKNKQKMVLIDKKGKPSETYFQIKKKFSSSTLLSIIPKTGRTHQIRVHALHAGHPIFFDKRYGKNDLDADIKNNHKINRLLLHSSGVHFIHPKNGNKIYIKAPLDIDFQNYLNTII</sequence>
<reference key="1">
    <citation type="journal article" date="2000" name="Nature">
        <title>Genome sequence of the endocellular bacterial symbiont of aphids Buchnera sp. APS.</title>
        <authorList>
            <person name="Shigenobu S."/>
            <person name="Watanabe H."/>
            <person name="Hattori M."/>
            <person name="Sakaki Y."/>
            <person name="Ishikawa H."/>
        </authorList>
    </citation>
    <scope>NUCLEOTIDE SEQUENCE [LARGE SCALE GENOMIC DNA]</scope>
    <source>
        <strain>APS</strain>
    </source>
</reference>
<proteinExistence type="inferred from homology"/>
<organism>
    <name type="scientific">Buchnera aphidicola subsp. Acyrthosiphon pisum (strain APS)</name>
    <name type="common">Acyrthosiphon pisum symbiotic bacterium</name>
    <dbReference type="NCBI Taxonomy" id="107806"/>
    <lineage>
        <taxon>Bacteria</taxon>
        <taxon>Pseudomonadati</taxon>
        <taxon>Pseudomonadota</taxon>
        <taxon>Gammaproteobacteria</taxon>
        <taxon>Enterobacterales</taxon>
        <taxon>Erwiniaceae</taxon>
        <taxon>Buchnera</taxon>
    </lineage>
</organism>